<protein>
    <recommendedName>
        <fullName>Histone H1, orphon</fullName>
    </recommendedName>
</protein>
<name>H1O_CHITH</name>
<dbReference type="EMBL" id="X72803">
    <property type="protein sequence ID" value="CAA51322.1"/>
    <property type="molecule type" value="Genomic_DNA"/>
</dbReference>
<dbReference type="PIR" id="S40436">
    <property type="entry name" value="S40436"/>
</dbReference>
<dbReference type="SMR" id="Q07134"/>
<dbReference type="GO" id="GO:0000786">
    <property type="term" value="C:nucleosome"/>
    <property type="evidence" value="ECO:0007669"/>
    <property type="project" value="InterPro"/>
</dbReference>
<dbReference type="GO" id="GO:0005634">
    <property type="term" value="C:nucleus"/>
    <property type="evidence" value="ECO:0007669"/>
    <property type="project" value="UniProtKB-SubCell"/>
</dbReference>
<dbReference type="GO" id="GO:0003677">
    <property type="term" value="F:DNA binding"/>
    <property type="evidence" value="ECO:0007669"/>
    <property type="project" value="UniProtKB-KW"/>
</dbReference>
<dbReference type="GO" id="GO:0030527">
    <property type="term" value="F:structural constituent of chromatin"/>
    <property type="evidence" value="ECO:0007669"/>
    <property type="project" value="InterPro"/>
</dbReference>
<dbReference type="GO" id="GO:0006334">
    <property type="term" value="P:nucleosome assembly"/>
    <property type="evidence" value="ECO:0007669"/>
    <property type="project" value="InterPro"/>
</dbReference>
<dbReference type="CDD" id="cd00073">
    <property type="entry name" value="H15"/>
    <property type="match status" value="1"/>
</dbReference>
<dbReference type="FunFam" id="1.10.10.10:FF:000140">
    <property type="entry name" value="Histone H1.0"/>
    <property type="match status" value="1"/>
</dbReference>
<dbReference type="Gene3D" id="1.10.10.10">
    <property type="entry name" value="Winged helix-like DNA-binding domain superfamily/Winged helix DNA-binding domain"/>
    <property type="match status" value="1"/>
</dbReference>
<dbReference type="InterPro" id="IPR005819">
    <property type="entry name" value="H1/H5"/>
</dbReference>
<dbReference type="InterPro" id="IPR005818">
    <property type="entry name" value="Histone_H1/H5_H15"/>
</dbReference>
<dbReference type="InterPro" id="IPR036388">
    <property type="entry name" value="WH-like_DNA-bd_sf"/>
</dbReference>
<dbReference type="InterPro" id="IPR036390">
    <property type="entry name" value="WH_DNA-bd_sf"/>
</dbReference>
<dbReference type="Pfam" id="PF00538">
    <property type="entry name" value="Linker_histone"/>
    <property type="match status" value="1"/>
</dbReference>
<dbReference type="PRINTS" id="PR00624">
    <property type="entry name" value="HISTONEH5"/>
</dbReference>
<dbReference type="SMART" id="SM00526">
    <property type="entry name" value="H15"/>
    <property type="match status" value="1"/>
</dbReference>
<dbReference type="SUPFAM" id="SSF46785">
    <property type="entry name" value="Winged helix' DNA-binding domain"/>
    <property type="match status" value="1"/>
</dbReference>
<dbReference type="PROSITE" id="PS51504">
    <property type="entry name" value="H15"/>
    <property type="match status" value="1"/>
</dbReference>
<keyword id="KW-0158">Chromosome</keyword>
<keyword id="KW-0238">DNA-binding</keyword>
<keyword id="KW-0539">Nucleus</keyword>
<sequence>MSDPAPEIEAPVEAAPVASPPKGKKEKAPKAPKSPKAEKPKSDKPKKPKVAPTHPPVSEMVVNAVTTLKERGGSSLIAIKKFVAAQYKVDVEKLVPFIKKFLKSSVAKGTLLQAKGKGASGSFKLPPAAKKVEKKPKKVPSTPKPKTTKPKRVTGEKKVVKKPAAKKPEAKKATKAAKPATKKVVAKPASKKAAAPKPKAAKPAAKKPEAKKATKAAAKKPVAKPVAKKPAAKPAKKPAAKKAK</sequence>
<evidence type="ECO:0000255" key="1">
    <source>
        <dbReference type="PROSITE-ProRule" id="PRU00837"/>
    </source>
</evidence>
<evidence type="ECO:0000256" key="2">
    <source>
        <dbReference type="SAM" id="MobiDB-lite"/>
    </source>
</evidence>
<proteinExistence type="inferred from homology"/>
<feature type="chain" id="PRO_0000195972" description="Histone H1, orphon">
    <location>
        <begin position="1"/>
        <end position="244"/>
    </location>
</feature>
<feature type="domain" description="H15" evidence="1">
    <location>
        <begin position="53"/>
        <end position="127"/>
    </location>
</feature>
<feature type="region of interest" description="Disordered" evidence="2">
    <location>
        <begin position="1"/>
        <end position="59"/>
    </location>
</feature>
<feature type="region of interest" description="Disordered" evidence="2">
    <location>
        <begin position="113"/>
        <end position="244"/>
    </location>
</feature>
<feature type="compositionally biased region" description="Low complexity" evidence="2">
    <location>
        <begin position="1"/>
        <end position="21"/>
    </location>
</feature>
<feature type="compositionally biased region" description="Basic and acidic residues" evidence="2">
    <location>
        <begin position="35"/>
        <end position="45"/>
    </location>
</feature>
<feature type="compositionally biased region" description="Low complexity" evidence="2">
    <location>
        <begin position="186"/>
        <end position="203"/>
    </location>
</feature>
<feature type="compositionally biased region" description="Basic residues" evidence="2">
    <location>
        <begin position="213"/>
        <end position="244"/>
    </location>
</feature>
<comment type="function">
    <text>Histones H1 are necessary for the condensation of nucleosome chains into higher-order structures.</text>
</comment>
<comment type="subcellular location">
    <subcellularLocation>
        <location>Nucleus</location>
    </subcellularLocation>
    <subcellularLocation>
        <location>Chromosome</location>
    </subcellularLocation>
</comment>
<comment type="similarity">
    <text evidence="1">Belongs to the histone H1/H5 family.</text>
</comment>
<accession>Q07134</accession>
<reference key="1">
    <citation type="journal article" date="1993" name="J. Mol. Biol.">
        <title>Divergent evolution of an 'orphon' histone gene cluster in Chironomus.</title>
        <authorList>
            <person name="Hankeln T."/>
            <person name="Schmidt E.R."/>
        </authorList>
    </citation>
    <scope>NUCLEOTIDE SEQUENCE [GENOMIC DNA]</scope>
</reference>
<organism>
    <name type="scientific">Chironomus thummi thummi</name>
    <name type="common">Midge</name>
    <dbReference type="NCBI Taxonomy" id="7155"/>
    <lineage>
        <taxon>Eukaryota</taxon>
        <taxon>Metazoa</taxon>
        <taxon>Ecdysozoa</taxon>
        <taxon>Arthropoda</taxon>
        <taxon>Hexapoda</taxon>
        <taxon>Insecta</taxon>
        <taxon>Pterygota</taxon>
        <taxon>Neoptera</taxon>
        <taxon>Endopterygota</taxon>
        <taxon>Diptera</taxon>
        <taxon>Nematocera</taxon>
        <taxon>Chironomoidea</taxon>
        <taxon>Chironomidae</taxon>
        <taxon>Chironominae</taxon>
        <taxon>Chironomus</taxon>
    </lineage>
</organism>